<comment type="function">
    <text evidence="1">Catalyzes the NADPH-dependent reduction of N-acetyl-5-glutamyl phosphate to yield N-acetyl-L-glutamate 5-semialdehyde.</text>
</comment>
<comment type="catalytic activity">
    <reaction evidence="1">
        <text>N-acetyl-L-glutamate 5-semialdehyde + phosphate + NADP(+) = N-acetyl-L-glutamyl 5-phosphate + NADPH + H(+)</text>
        <dbReference type="Rhea" id="RHEA:21588"/>
        <dbReference type="ChEBI" id="CHEBI:15378"/>
        <dbReference type="ChEBI" id="CHEBI:29123"/>
        <dbReference type="ChEBI" id="CHEBI:43474"/>
        <dbReference type="ChEBI" id="CHEBI:57783"/>
        <dbReference type="ChEBI" id="CHEBI:57936"/>
        <dbReference type="ChEBI" id="CHEBI:58349"/>
        <dbReference type="EC" id="1.2.1.38"/>
    </reaction>
</comment>
<comment type="pathway">
    <text evidence="1">Amino-acid biosynthesis; L-arginine biosynthesis; N(2)-acetyl-L-ornithine from L-glutamate: step 3/4.</text>
</comment>
<comment type="subcellular location">
    <subcellularLocation>
        <location evidence="1">Cytoplasm</location>
    </subcellularLocation>
</comment>
<comment type="similarity">
    <text evidence="1">Belongs to the NAGSA dehydrogenase family. Type 1 subfamily.</text>
</comment>
<protein>
    <recommendedName>
        <fullName evidence="1">N-acetyl-gamma-glutamyl-phosphate reductase</fullName>
        <shortName evidence="1">AGPR</shortName>
        <ecNumber evidence="1">1.2.1.38</ecNumber>
    </recommendedName>
    <alternativeName>
        <fullName evidence="1">N-acetyl-glutamate semialdehyde dehydrogenase</fullName>
        <shortName evidence="1">NAGSA dehydrogenase</shortName>
    </alternativeName>
</protein>
<keyword id="KW-0028">Amino-acid biosynthesis</keyword>
<keyword id="KW-0055">Arginine biosynthesis</keyword>
<keyword id="KW-0963">Cytoplasm</keyword>
<keyword id="KW-0521">NADP</keyword>
<keyword id="KW-0560">Oxidoreductase</keyword>
<gene>
    <name evidence="1" type="primary">argC</name>
    <name type="ordered locus">PMT9312_0908</name>
</gene>
<sequence>MNVAIVGATGYGGIQAVNLLKNNKNYKISFLGGNKTSGSKWNDNFPFIYLDTDPYIEKISVENISKNSDVALLCLPNGISSTLTRKLLDRGVKVIDLSADYRYKSLVEWEKVYSKEAVAFKRNDDDLCKEAVYGLPEINKEAISNGRLISCPGCYPTSALIPLVPYLSQGIIENEGIVIDSKSGTSGGGREPNQKLLLSECGEGLSAYGLINHRHTSEIEQVASLISGNKIELLFTPHLVPISRGMHSTIYGRLRDPGLTSDDCRILLDNYYRNFKNITVLPVGTFPSTKWVKNTNQIFLSVKVDIRNGRIVILSVIDNLLKGQTGQAIQNLNIMSGFSMDDGLELTNNFP</sequence>
<accession>Q31AX7</accession>
<name>ARGC_PROM9</name>
<feature type="chain" id="PRO_1000011034" description="N-acetyl-gamma-glutamyl-phosphate reductase">
    <location>
        <begin position="1"/>
        <end position="351"/>
    </location>
</feature>
<feature type="active site" evidence="1">
    <location>
        <position position="154"/>
    </location>
</feature>
<dbReference type="EC" id="1.2.1.38" evidence="1"/>
<dbReference type="EMBL" id="CP000111">
    <property type="protein sequence ID" value="ABB49968.1"/>
    <property type="molecule type" value="Genomic_DNA"/>
</dbReference>
<dbReference type="RefSeq" id="WP_011376462.1">
    <property type="nucleotide sequence ID" value="NC_007577.1"/>
</dbReference>
<dbReference type="SMR" id="Q31AX7"/>
<dbReference type="STRING" id="74546.PMT9312_0908"/>
<dbReference type="KEGG" id="pmi:PMT9312_0908"/>
<dbReference type="eggNOG" id="COG0002">
    <property type="taxonomic scope" value="Bacteria"/>
</dbReference>
<dbReference type="HOGENOM" id="CLU_006384_0_1_3"/>
<dbReference type="OrthoDB" id="9801289at2"/>
<dbReference type="UniPathway" id="UPA00068">
    <property type="reaction ID" value="UER00108"/>
</dbReference>
<dbReference type="Proteomes" id="UP000002715">
    <property type="component" value="Chromosome"/>
</dbReference>
<dbReference type="GO" id="GO:0005737">
    <property type="term" value="C:cytoplasm"/>
    <property type="evidence" value="ECO:0007669"/>
    <property type="project" value="UniProtKB-SubCell"/>
</dbReference>
<dbReference type="GO" id="GO:0003942">
    <property type="term" value="F:N-acetyl-gamma-glutamyl-phosphate reductase activity"/>
    <property type="evidence" value="ECO:0007669"/>
    <property type="project" value="UniProtKB-UniRule"/>
</dbReference>
<dbReference type="GO" id="GO:0051287">
    <property type="term" value="F:NAD binding"/>
    <property type="evidence" value="ECO:0007669"/>
    <property type="project" value="InterPro"/>
</dbReference>
<dbReference type="GO" id="GO:0070401">
    <property type="term" value="F:NADP+ binding"/>
    <property type="evidence" value="ECO:0007669"/>
    <property type="project" value="InterPro"/>
</dbReference>
<dbReference type="GO" id="GO:0006526">
    <property type="term" value="P:L-arginine biosynthetic process"/>
    <property type="evidence" value="ECO:0007669"/>
    <property type="project" value="UniProtKB-UniRule"/>
</dbReference>
<dbReference type="CDD" id="cd23934">
    <property type="entry name" value="AGPR_1_C"/>
    <property type="match status" value="1"/>
</dbReference>
<dbReference type="CDD" id="cd17895">
    <property type="entry name" value="AGPR_1_N"/>
    <property type="match status" value="1"/>
</dbReference>
<dbReference type="Gene3D" id="3.30.360.10">
    <property type="entry name" value="Dihydrodipicolinate Reductase, domain 2"/>
    <property type="match status" value="1"/>
</dbReference>
<dbReference type="Gene3D" id="3.40.50.720">
    <property type="entry name" value="NAD(P)-binding Rossmann-like Domain"/>
    <property type="match status" value="1"/>
</dbReference>
<dbReference type="HAMAP" id="MF_00150">
    <property type="entry name" value="ArgC_type1"/>
    <property type="match status" value="1"/>
</dbReference>
<dbReference type="InterPro" id="IPR023013">
    <property type="entry name" value="AGPR_AS"/>
</dbReference>
<dbReference type="InterPro" id="IPR000706">
    <property type="entry name" value="AGPR_type-1"/>
</dbReference>
<dbReference type="InterPro" id="IPR036291">
    <property type="entry name" value="NAD(P)-bd_dom_sf"/>
</dbReference>
<dbReference type="InterPro" id="IPR050085">
    <property type="entry name" value="NAGSA_dehydrogenase"/>
</dbReference>
<dbReference type="InterPro" id="IPR000534">
    <property type="entry name" value="Semialdehyde_DH_NAD-bd"/>
</dbReference>
<dbReference type="NCBIfam" id="TIGR01850">
    <property type="entry name" value="argC"/>
    <property type="match status" value="1"/>
</dbReference>
<dbReference type="PANTHER" id="PTHR32338:SF10">
    <property type="entry name" value="N-ACETYL-GAMMA-GLUTAMYL-PHOSPHATE REDUCTASE, CHLOROPLASTIC-RELATED"/>
    <property type="match status" value="1"/>
</dbReference>
<dbReference type="PANTHER" id="PTHR32338">
    <property type="entry name" value="N-ACETYL-GAMMA-GLUTAMYL-PHOSPHATE REDUCTASE, CHLOROPLASTIC-RELATED-RELATED"/>
    <property type="match status" value="1"/>
</dbReference>
<dbReference type="Pfam" id="PF01118">
    <property type="entry name" value="Semialdhyde_dh"/>
    <property type="match status" value="1"/>
</dbReference>
<dbReference type="Pfam" id="PF22698">
    <property type="entry name" value="Semialdhyde_dhC_1"/>
    <property type="match status" value="1"/>
</dbReference>
<dbReference type="SMART" id="SM00859">
    <property type="entry name" value="Semialdhyde_dh"/>
    <property type="match status" value="1"/>
</dbReference>
<dbReference type="SUPFAM" id="SSF55347">
    <property type="entry name" value="Glyceraldehyde-3-phosphate dehydrogenase-like, C-terminal domain"/>
    <property type="match status" value="1"/>
</dbReference>
<dbReference type="SUPFAM" id="SSF51735">
    <property type="entry name" value="NAD(P)-binding Rossmann-fold domains"/>
    <property type="match status" value="1"/>
</dbReference>
<dbReference type="PROSITE" id="PS01224">
    <property type="entry name" value="ARGC"/>
    <property type="match status" value="1"/>
</dbReference>
<reference key="1">
    <citation type="journal article" date="2006" name="Science">
        <title>Genomic islands and the ecology and evolution of Prochlorococcus.</title>
        <authorList>
            <person name="Coleman M.L."/>
            <person name="Sullivan M.B."/>
            <person name="Martiny A.C."/>
            <person name="Steglich C."/>
            <person name="Barry K."/>
            <person name="Delong E.F."/>
            <person name="Chisholm S.W."/>
        </authorList>
    </citation>
    <scope>NUCLEOTIDE SEQUENCE [LARGE SCALE GENOMIC DNA]</scope>
    <source>
        <strain>MIT 9312</strain>
    </source>
</reference>
<proteinExistence type="inferred from homology"/>
<evidence type="ECO:0000255" key="1">
    <source>
        <dbReference type="HAMAP-Rule" id="MF_00150"/>
    </source>
</evidence>
<organism>
    <name type="scientific">Prochlorococcus marinus (strain MIT 9312)</name>
    <dbReference type="NCBI Taxonomy" id="74546"/>
    <lineage>
        <taxon>Bacteria</taxon>
        <taxon>Bacillati</taxon>
        <taxon>Cyanobacteriota</taxon>
        <taxon>Cyanophyceae</taxon>
        <taxon>Synechococcales</taxon>
        <taxon>Prochlorococcaceae</taxon>
        <taxon>Prochlorococcus</taxon>
    </lineage>
</organism>